<feature type="chain" id="PRO_0000195199" description="Inositol-3-phosphate synthase">
    <location>
        <begin position="1"/>
        <end position="510"/>
    </location>
</feature>
<feature type="binding site" evidence="1">
    <location>
        <position position="70"/>
    </location>
    <ligand>
        <name>NAD(+)</name>
        <dbReference type="ChEBI" id="CHEBI:57540"/>
    </ligand>
</feature>
<feature type="binding site" evidence="1">
    <location>
        <position position="71"/>
    </location>
    <ligand>
        <name>NAD(+)</name>
        <dbReference type="ChEBI" id="CHEBI:57540"/>
    </ligand>
</feature>
<feature type="binding site" evidence="1">
    <location>
        <position position="72"/>
    </location>
    <ligand>
        <name>NAD(+)</name>
        <dbReference type="ChEBI" id="CHEBI:57540"/>
    </ligand>
</feature>
<feature type="binding site" evidence="1">
    <location>
        <position position="73"/>
    </location>
    <ligand>
        <name>NAD(+)</name>
        <dbReference type="ChEBI" id="CHEBI:57540"/>
    </ligand>
</feature>
<feature type="binding site" evidence="1">
    <location>
        <position position="143"/>
    </location>
    <ligand>
        <name>NAD(+)</name>
        <dbReference type="ChEBI" id="CHEBI:57540"/>
    </ligand>
</feature>
<feature type="binding site" evidence="1">
    <location>
        <position position="180"/>
    </location>
    <ligand>
        <name>NAD(+)</name>
        <dbReference type="ChEBI" id="CHEBI:57540"/>
    </ligand>
</feature>
<feature type="binding site" evidence="1">
    <location>
        <position position="190"/>
    </location>
    <ligand>
        <name>NAD(+)</name>
        <dbReference type="ChEBI" id="CHEBI:57540"/>
    </ligand>
</feature>
<feature type="binding site" evidence="1">
    <location>
        <position position="193"/>
    </location>
    <ligand>
        <name>NAD(+)</name>
        <dbReference type="ChEBI" id="CHEBI:57540"/>
    </ligand>
</feature>
<feature type="binding site" evidence="1">
    <location>
        <position position="230"/>
    </location>
    <ligand>
        <name>NAD(+)</name>
        <dbReference type="ChEBI" id="CHEBI:57540"/>
    </ligand>
</feature>
<feature type="binding site" evidence="1">
    <location>
        <position position="231"/>
    </location>
    <ligand>
        <name>NAD(+)</name>
        <dbReference type="ChEBI" id="CHEBI:57540"/>
    </ligand>
</feature>
<feature type="binding site" evidence="1">
    <location>
        <position position="232"/>
    </location>
    <ligand>
        <name>NAD(+)</name>
        <dbReference type="ChEBI" id="CHEBI:57540"/>
    </ligand>
</feature>
<feature type="binding site" evidence="1">
    <location>
        <position position="233"/>
    </location>
    <ligand>
        <name>NAD(+)</name>
        <dbReference type="ChEBI" id="CHEBI:57540"/>
    </ligand>
</feature>
<feature type="binding site" evidence="1">
    <location>
        <position position="281"/>
    </location>
    <ligand>
        <name>NAD(+)</name>
        <dbReference type="ChEBI" id="CHEBI:57540"/>
    </ligand>
</feature>
<feature type="binding site" evidence="1">
    <location>
        <position position="282"/>
    </location>
    <ligand>
        <name>NAD(+)</name>
        <dbReference type="ChEBI" id="CHEBI:57540"/>
    </ligand>
</feature>
<feature type="binding site" evidence="1">
    <location>
        <position position="306"/>
    </location>
    <ligand>
        <name>NAD(+)</name>
        <dbReference type="ChEBI" id="CHEBI:57540"/>
    </ligand>
</feature>
<feature type="binding site" evidence="1">
    <location>
        <position position="309"/>
    </location>
    <ligand>
        <name>NAD(+)</name>
        <dbReference type="ChEBI" id="CHEBI:57540"/>
    </ligand>
</feature>
<feature type="binding site" evidence="1">
    <location>
        <position position="340"/>
    </location>
    <ligand>
        <name>NAD(+)</name>
        <dbReference type="ChEBI" id="CHEBI:57540"/>
    </ligand>
</feature>
<feature type="binding site" evidence="1">
    <location>
        <position position="341"/>
    </location>
    <ligand>
        <name>NAD(+)</name>
        <dbReference type="ChEBI" id="CHEBI:57540"/>
    </ligand>
</feature>
<feature type="binding site" evidence="1">
    <location>
        <position position="342"/>
    </location>
    <ligand>
        <name>NAD(+)</name>
        <dbReference type="ChEBI" id="CHEBI:57540"/>
    </ligand>
</feature>
<feature type="binding site" evidence="1">
    <location>
        <position position="355"/>
    </location>
    <ligand>
        <name>NAD(+)</name>
        <dbReference type="ChEBI" id="CHEBI:57540"/>
    </ligand>
</feature>
<feature type="binding site" evidence="1">
    <location>
        <position position="393"/>
    </location>
    <ligand>
        <name>NAD(+)</name>
        <dbReference type="ChEBI" id="CHEBI:57540"/>
    </ligand>
</feature>
<feature type="binding site" evidence="1">
    <location>
        <position position="394"/>
    </location>
    <ligand>
        <name>NAD(+)</name>
        <dbReference type="ChEBI" id="CHEBI:57540"/>
    </ligand>
</feature>
<feature type="binding site" evidence="1">
    <location>
        <position position="422"/>
    </location>
    <ligand>
        <name>NAD(+)</name>
        <dbReference type="ChEBI" id="CHEBI:57540"/>
    </ligand>
</feature>
<feature type="binding site" evidence="1">
    <location>
        <position position="423"/>
    </location>
    <ligand>
        <name>NAD(+)</name>
        <dbReference type="ChEBI" id="CHEBI:57540"/>
    </ligand>
</feature>
<keyword id="KW-0963">Cytoplasm</keyword>
<keyword id="KW-0398">Inositol biosynthesis</keyword>
<keyword id="KW-0413">Isomerase</keyword>
<keyword id="KW-0444">Lipid biosynthesis</keyword>
<keyword id="KW-0443">Lipid metabolism</keyword>
<keyword id="KW-0520">NAD</keyword>
<keyword id="KW-0539">Nucleus</keyword>
<keyword id="KW-0594">Phospholipid biosynthesis</keyword>
<keyword id="KW-1208">Phospholipid metabolism</keyword>
<keyword id="KW-1185">Reference proteome</keyword>
<comment type="function">
    <text evidence="2">Key enzyme in myo-inositol biosynthesis pathway that catalyzes the conversion of glucose 6-phosphate to 1-myo-inositol 1-phosphate in a NAD-dependent manner.</text>
</comment>
<comment type="catalytic activity">
    <reaction evidence="2">
        <text>D-glucose 6-phosphate = 1D-myo-inositol 3-phosphate</text>
        <dbReference type="Rhea" id="RHEA:10716"/>
        <dbReference type="ChEBI" id="CHEBI:58401"/>
        <dbReference type="ChEBI" id="CHEBI:61548"/>
        <dbReference type="EC" id="5.5.1.4"/>
    </reaction>
</comment>
<comment type="cofactor">
    <cofactor evidence="2">
        <name>NAD(+)</name>
        <dbReference type="ChEBI" id="CHEBI:57540"/>
    </cofactor>
</comment>
<comment type="pathway">
    <text>Polyol metabolism; myo-inositol biosynthesis; myo-inositol from D-glucose 6-phosphate: step 1/2.</text>
</comment>
<comment type="subcellular location">
    <subcellularLocation>
        <location evidence="2">Cytoplasm</location>
        <location evidence="2">Cytosol</location>
    </subcellularLocation>
    <subcellularLocation>
        <location evidence="2">Nucleus</location>
    </subcellularLocation>
</comment>
<comment type="similarity">
    <text evidence="3">Belongs to the myo-inositol 1-phosphate synthase family.</text>
</comment>
<accession>Q9LW96</accession>
<organism>
    <name type="scientific">Nicotiana tabacum</name>
    <name type="common">Common tobacco</name>
    <dbReference type="NCBI Taxonomy" id="4097"/>
    <lineage>
        <taxon>Eukaryota</taxon>
        <taxon>Viridiplantae</taxon>
        <taxon>Streptophyta</taxon>
        <taxon>Embryophyta</taxon>
        <taxon>Tracheophyta</taxon>
        <taxon>Spermatophyta</taxon>
        <taxon>Magnoliopsida</taxon>
        <taxon>eudicotyledons</taxon>
        <taxon>Gunneridae</taxon>
        <taxon>Pentapetalae</taxon>
        <taxon>asterids</taxon>
        <taxon>lamiids</taxon>
        <taxon>Solanales</taxon>
        <taxon>Solanaceae</taxon>
        <taxon>Nicotianoideae</taxon>
        <taxon>Nicotianeae</taxon>
        <taxon>Nicotiana</taxon>
    </lineage>
</organism>
<protein>
    <recommendedName>
        <fullName>Inositol-3-phosphate synthase</fullName>
        <shortName>MIP synthase</shortName>
        <ecNumber evidence="2">5.5.1.4</ecNumber>
    </recommendedName>
    <alternativeName>
        <fullName>Myo-inositol 1-phosphate synthase</fullName>
        <shortName>IPS</shortName>
        <shortName>MI-1-P synthase</shortName>
    </alternativeName>
</protein>
<name>INO1_TOBAC</name>
<proteinExistence type="evidence at transcript level"/>
<reference key="1">
    <citation type="journal article" date="2000" name="Plant Cell Physiol.">
        <title>Screening of wound-responsive genes identifies an immediate-early expressed gene encoding a highly charged protein in mechanically wounded tobacco plants.</title>
        <authorList>
            <person name="Hara K."/>
            <person name="Yagi M."/>
            <person name="Koizumi N."/>
            <person name="Kusano T."/>
            <person name="Sano H."/>
        </authorList>
    </citation>
    <scope>NUCLEOTIDE SEQUENCE [MRNA]</scope>
    <source>
        <tissue>Leaf</tissue>
    </source>
</reference>
<dbReference type="EC" id="5.5.1.4" evidence="2"/>
<dbReference type="EMBL" id="AB009881">
    <property type="protein sequence ID" value="BAA95788.1"/>
    <property type="molecule type" value="mRNA"/>
</dbReference>
<dbReference type="RefSeq" id="NP_001311846.1">
    <property type="nucleotide sequence ID" value="NM_001324917.1"/>
</dbReference>
<dbReference type="SMR" id="Q9LW96"/>
<dbReference type="STRING" id="4097.Q9LW96"/>
<dbReference type="PaxDb" id="4097-Q9LW96"/>
<dbReference type="GeneID" id="107766502"/>
<dbReference type="KEGG" id="nta:107766502"/>
<dbReference type="OrthoDB" id="2887at2759"/>
<dbReference type="UniPathway" id="UPA00823">
    <property type="reaction ID" value="UER00787"/>
</dbReference>
<dbReference type="Proteomes" id="UP000084051">
    <property type="component" value="Unplaced"/>
</dbReference>
<dbReference type="GO" id="GO:0005737">
    <property type="term" value="C:cytoplasm"/>
    <property type="evidence" value="ECO:0000318"/>
    <property type="project" value="GO_Central"/>
</dbReference>
<dbReference type="GO" id="GO:0005829">
    <property type="term" value="C:cytosol"/>
    <property type="evidence" value="ECO:0007669"/>
    <property type="project" value="UniProtKB-SubCell"/>
</dbReference>
<dbReference type="GO" id="GO:0005634">
    <property type="term" value="C:nucleus"/>
    <property type="evidence" value="ECO:0007669"/>
    <property type="project" value="UniProtKB-SubCell"/>
</dbReference>
<dbReference type="GO" id="GO:0004512">
    <property type="term" value="F:inositol-3-phosphate synthase activity"/>
    <property type="evidence" value="ECO:0000318"/>
    <property type="project" value="GO_Central"/>
</dbReference>
<dbReference type="GO" id="GO:0006021">
    <property type="term" value="P:inositol biosynthetic process"/>
    <property type="evidence" value="ECO:0000318"/>
    <property type="project" value="GO_Central"/>
</dbReference>
<dbReference type="GO" id="GO:0008654">
    <property type="term" value="P:phospholipid biosynthetic process"/>
    <property type="evidence" value="ECO:0007669"/>
    <property type="project" value="UniProtKB-KW"/>
</dbReference>
<dbReference type="FunFam" id="3.30.360.10:FF:000040">
    <property type="entry name" value="Inositol 1-phosphate synthase"/>
    <property type="match status" value="1"/>
</dbReference>
<dbReference type="FunFam" id="3.40.50.720:FF:000107">
    <property type="entry name" value="inositol-3-phosphate synthase"/>
    <property type="match status" value="1"/>
</dbReference>
<dbReference type="FunFam" id="3.40.50.720:FF:000069">
    <property type="entry name" value="Inositol-3-phosphate synthase 1"/>
    <property type="match status" value="1"/>
</dbReference>
<dbReference type="Gene3D" id="3.40.50.720">
    <property type="entry name" value="NAD(P)-binding Rossmann-like Domain"/>
    <property type="match status" value="2"/>
</dbReference>
<dbReference type="InterPro" id="IPR002587">
    <property type="entry name" value="Myo-inos-1-P_Synthase"/>
</dbReference>
<dbReference type="InterPro" id="IPR013021">
    <property type="entry name" value="Myo-inos-1-P_Synthase_GAPDH"/>
</dbReference>
<dbReference type="InterPro" id="IPR036291">
    <property type="entry name" value="NAD(P)-bd_dom_sf"/>
</dbReference>
<dbReference type="PANTHER" id="PTHR11510">
    <property type="entry name" value="MYO-INOSITOL-1 PHOSPHATE SYNTHASE"/>
    <property type="match status" value="1"/>
</dbReference>
<dbReference type="Pfam" id="PF01658">
    <property type="entry name" value="Inos-1-P_synth"/>
    <property type="match status" value="1"/>
</dbReference>
<dbReference type="Pfam" id="PF07994">
    <property type="entry name" value="NAD_binding_5"/>
    <property type="match status" value="1"/>
</dbReference>
<dbReference type="PIRSF" id="PIRSF015578">
    <property type="entry name" value="Myoinos-ppht_syn"/>
    <property type="match status" value="1"/>
</dbReference>
<dbReference type="SUPFAM" id="SSF55347">
    <property type="entry name" value="Glyceraldehyde-3-phosphate dehydrogenase-like, C-terminal domain"/>
    <property type="match status" value="1"/>
</dbReference>
<dbReference type="SUPFAM" id="SSF51735">
    <property type="entry name" value="NAD(P)-binding Rossmann-fold domains"/>
    <property type="match status" value="1"/>
</dbReference>
<sequence>MFIENFKVESPNVKYTESEIHSVYDYQTTELVHEEKNGTYQWTVKPKTVKYEFKTDVHVPKLGVMLVGWGGNNGSTLTGGVIANREGISWATKDKVQQANYFGSLTQASTIRVGSFNGEEIYAPFKSLLPMVNPDDVVFGGWDISGMNLADAMARAKVFDIDLQKQLRPYMESMVPLPGIYDPDFIAANQGSRANNVIKGTKKEQIDQIIKDIREFKEKNKVDKVVVLWTANTERYSNVVVGLNDTMENLFASVDRNEAEISPSTLYAIACILENVPFINGSPQNTFVPGLIDLAIKRNTLIGGDDFKSGQTKMKSVLVDFLVGAGIKPTSIVSYNHLGNNDGMNLSAPQTFRSKEISKSNVVDDMVSSNAILYEPGEHPDHVVVIKYVPYVGDSKRAMDEYTSEIFMGGKNTIVLHNTCEDSLLAAPIILDLVLLAELSTRIQLKAEGEGKFHSFHPVATILSYLTKAPLVPPGTPVVNALSKQRAMLENILRACVGLAPENNMILEYK</sequence>
<evidence type="ECO:0000250" key="1">
    <source>
        <dbReference type="UniProtKB" id="P11986"/>
    </source>
</evidence>
<evidence type="ECO:0000250" key="2">
    <source>
        <dbReference type="UniProtKB" id="P42801"/>
    </source>
</evidence>
<evidence type="ECO:0000305" key="3"/>